<sequence>MTTILKHLPVGQRIGIAFSGGLDTSAALLWMRQKGAVPYAYTANLGQPDEEDYDAIPRRAMEYGAENARLIDCRKQLVAEGIAAIQCGAFHNTTGGLTYFNTTPLGRAVTGTMLVAAMKEDGVNIWGDGSTYKGNDIERFYRYGLLTNAELQIYKPWLDTDFIDELGGRHEMSEFMIACGFDYKMSVEKAYSTDSNMLGATHEAKDLEYLNSSVKIVNPIMGVKFWDESVKIPAEEVTVRFEQGHPVALNGKTFSDDVEMMLEANRIGGRHGLGMSDQIENRIIEAKSRGIYEAPGMALLHIAYERLLTGIHNEDTIEQYHAHGRQLGRLLYQGRWFDSQALMLRDSLQRWVASQITGEVTLELRRGNDYSILNTVSENLTYKPERLTMEKGDSVFSPDDRIGQLTMRNLDITDTREKLFGYAKTGLLSSSAASGVPQVENLENKGQ</sequence>
<proteinExistence type="inferred from homology"/>
<protein>
    <recommendedName>
        <fullName evidence="1">Argininosuccinate synthase</fullName>
        <ecNumber evidence="1">6.3.4.5</ecNumber>
    </recommendedName>
    <alternativeName>
        <fullName evidence="1">Citrulline--aspartate ligase</fullName>
    </alternativeName>
</protein>
<dbReference type="EC" id="6.3.4.5" evidence="1"/>
<dbReference type="EMBL" id="CU928164">
    <property type="protein sequence ID" value="CAR19784.1"/>
    <property type="molecule type" value="Genomic_DNA"/>
</dbReference>
<dbReference type="RefSeq" id="WP_000207680.1">
    <property type="nucleotide sequence ID" value="NC_011750.1"/>
</dbReference>
<dbReference type="RefSeq" id="YP_002409571.1">
    <property type="nucleotide sequence ID" value="NC_011750.1"/>
</dbReference>
<dbReference type="SMR" id="B7NKP0"/>
<dbReference type="STRING" id="585057.ECIAI39_3668"/>
<dbReference type="KEGG" id="ect:ECIAI39_3668"/>
<dbReference type="PATRIC" id="fig|585057.6.peg.3801"/>
<dbReference type="HOGENOM" id="CLU_032784_4_1_6"/>
<dbReference type="UniPathway" id="UPA00068">
    <property type="reaction ID" value="UER00113"/>
</dbReference>
<dbReference type="Proteomes" id="UP000000749">
    <property type="component" value="Chromosome"/>
</dbReference>
<dbReference type="GO" id="GO:0005737">
    <property type="term" value="C:cytoplasm"/>
    <property type="evidence" value="ECO:0007669"/>
    <property type="project" value="UniProtKB-SubCell"/>
</dbReference>
<dbReference type="GO" id="GO:0004055">
    <property type="term" value="F:argininosuccinate synthase activity"/>
    <property type="evidence" value="ECO:0007669"/>
    <property type="project" value="UniProtKB-UniRule"/>
</dbReference>
<dbReference type="GO" id="GO:0005524">
    <property type="term" value="F:ATP binding"/>
    <property type="evidence" value="ECO:0007669"/>
    <property type="project" value="UniProtKB-UniRule"/>
</dbReference>
<dbReference type="GO" id="GO:0042803">
    <property type="term" value="F:protein homodimerization activity"/>
    <property type="evidence" value="ECO:0007669"/>
    <property type="project" value="InterPro"/>
</dbReference>
<dbReference type="GO" id="GO:0000053">
    <property type="term" value="P:argininosuccinate metabolic process"/>
    <property type="evidence" value="ECO:0007669"/>
    <property type="project" value="TreeGrafter"/>
</dbReference>
<dbReference type="GO" id="GO:0006526">
    <property type="term" value="P:L-arginine biosynthetic process"/>
    <property type="evidence" value="ECO:0007669"/>
    <property type="project" value="UniProtKB-UniRule"/>
</dbReference>
<dbReference type="GO" id="GO:0000050">
    <property type="term" value="P:urea cycle"/>
    <property type="evidence" value="ECO:0007669"/>
    <property type="project" value="TreeGrafter"/>
</dbReference>
<dbReference type="CDD" id="cd01999">
    <property type="entry name" value="ASS"/>
    <property type="match status" value="1"/>
</dbReference>
<dbReference type="FunFam" id="1.10.287.400:FF:000001">
    <property type="entry name" value="Argininosuccinate synthase"/>
    <property type="match status" value="1"/>
</dbReference>
<dbReference type="Gene3D" id="1.10.287.400">
    <property type="match status" value="1"/>
</dbReference>
<dbReference type="Gene3D" id="3.90.1260.10">
    <property type="entry name" value="Argininosuccinate synthetase, chain A, domain 2"/>
    <property type="match status" value="1"/>
</dbReference>
<dbReference type="Gene3D" id="3.40.50.620">
    <property type="entry name" value="HUPs"/>
    <property type="match status" value="1"/>
</dbReference>
<dbReference type="HAMAP" id="MF_00581">
    <property type="entry name" value="Arg_succ_synth_type2"/>
    <property type="match status" value="1"/>
</dbReference>
<dbReference type="InterPro" id="IPR023437">
    <property type="entry name" value="Arg_succ_synth_type2_subfam"/>
</dbReference>
<dbReference type="InterPro" id="IPR048268">
    <property type="entry name" value="Arginosuc_syn_C"/>
</dbReference>
<dbReference type="InterPro" id="IPR048267">
    <property type="entry name" value="Arginosuc_syn_N"/>
</dbReference>
<dbReference type="InterPro" id="IPR001518">
    <property type="entry name" value="Arginosuc_synth"/>
</dbReference>
<dbReference type="InterPro" id="IPR018223">
    <property type="entry name" value="Arginosuc_synth_CS"/>
</dbReference>
<dbReference type="InterPro" id="IPR023434">
    <property type="entry name" value="Arginosuc_synth_type_1_subfam"/>
</dbReference>
<dbReference type="InterPro" id="IPR024074">
    <property type="entry name" value="AS_cat/multimer_dom_body"/>
</dbReference>
<dbReference type="InterPro" id="IPR024073">
    <property type="entry name" value="AS_multimer_C_tail"/>
</dbReference>
<dbReference type="InterPro" id="IPR014729">
    <property type="entry name" value="Rossmann-like_a/b/a_fold"/>
</dbReference>
<dbReference type="NCBIfam" id="TIGR00032">
    <property type="entry name" value="argG"/>
    <property type="match status" value="1"/>
</dbReference>
<dbReference type="NCBIfam" id="NF003779">
    <property type="entry name" value="PRK05370.1"/>
    <property type="match status" value="1"/>
</dbReference>
<dbReference type="PANTHER" id="PTHR11587">
    <property type="entry name" value="ARGININOSUCCINATE SYNTHASE"/>
    <property type="match status" value="1"/>
</dbReference>
<dbReference type="PANTHER" id="PTHR11587:SF2">
    <property type="entry name" value="ARGININOSUCCINATE SYNTHASE"/>
    <property type="match status" value="1"/>
</dbReference>
<dbReference type="Pfam" id="PF20979">
    <property type="entry name" value="Arginosuc_syn_C"/>
    <property type="match status" value="1"/>
</dbReference>
<dbReference type="Pfam" id="PF00764">
    <property type="entry name" value="Arginosuc_synth"/>
    <property type="match status" value="1"/>
</dbReference>
<dbReference type="SUPFAM" id="SSF52402">
    <property type="entry name" value="Adenine nucleotide alpha hydrolases-like"/>
    <property type="match status" value="1"/>
</dbReference>
<dbReference type="SUPFAM" id="SSF69864">
    <property type="entry name" value="Argininosuccinate synthetase, C-terminal domain"/>
    <property type="match status" value="1"/>
</dbReference>
<dbReference type="PROSITE" id="PS00564">
    <property type="entry name" value="ARGININOSUCCIN_SYN_1"/>
    <property type="match status" value="1"/>
</dbReference>
<dbReference type="PROSITE" id="PS00565">
    <property type="entry name" value="ARGININOSUCCIN_SYN_2"/>
    <property type="match status" value="1"/>
</dbReference>
<organism>
    <name type="scientific">Escherichia coli O7:K1 (strain IAI39 / ExPEC)</name>
    <dbReference type="NCBI Taxonomy" id="585057"/>
    <lineage>
        <taxon>Bacteria</taxon>
        <taxon>Pseudomonadati</taxon>
        <taxon>Pseudomonadota</taxon>
        <taxon>Gammaproteobacteria</taxon>
        <taxon>Enterobacterales</taxon>
        <taxon>Enterobacteriaceae</taxon>
        <taxon>Escherichia</taxon>
    </lineage>
</organism>
<feature type="chain" id="PRO_1000129747" description="Argininosuccinate synthase">
    <location>
        <begin position="1"/>
        <end position="447"/>
    </location>
</feature>
<feature type="binding site" evidence="1">
    <location>
        <begin position="17"/>
        <end position="25"/>
    </location>
    <ligand>
        <name>ATP</name>
        <dbReference type="ChEBI" id="CHEBI:30616"/>
    </ligand>
</feature>
<feature type="binding site" evidence="1">
    <location>
        <position position="43"/>
    </location>
    <ligand>
        <name>ATP</name>
        <dbReference type="ChEBI" id="CHEBI:30616"/>
    </ligand>
</feature>
<feature type="binding site" evidence="1">
    <location>
        <position position="99"/>
    </location>
    <ligand>
        <name>L-citrulline</name>
        <dbReference type="ChEBI" id="CHEBI:57743"/>
    </ligand>
</feature>
<feature type="binding site" evidence="1">
    <location>
        <position position="129"/>
    </location>
    <ligand>
        <name>ATP</name>
        <dbReference type="ChEBI" id="CHEBI:30616"/>
    </ligand>
</feature>
<feature type="binding site" evidence="1">
    <location>
        <position position="131"/>
    </location>
    <ligand>
        <name>ATP</name>
        <dbReference type="ChEBI" id="CHEBI:30616"/>
    </ligand>
</feature>
<feature type="binding site" evidence="1">
    <location>
        <position position="131"/>
    </location>
    <ligand>
        <name>L-aspartate</name>
        <dbReference type="ChEBI" id="CHEBI:29991"/>
    </ligand>
</feature>
<feature type="binding site" evidence="1">
    <location>
        <position position="135"/>
    </location>
    <ligand>
        <name>L-aspartate</name>
        <dbReference type="ChEBI" id="CHEBI:29991"/>
    </ligand>
</feature>
<feature type="binding site" evidence="1">
    <location>
        <position position="135"/>
    </location>
    <ligand>
        <name>L-citrulline</name>
        <dbReference type="ChEBI" id="CHEBI:57743"/>
    </ligand>
</feature>
<feature type="binding site" evidence="1">
    <location>
        <position position="136"/>
    </location>
    <ligand>
        <name>ATP</name>
        <dbReference type="ChEBI" id="CHEBI:30616"/>
    </ligand>
</feature>
<feature type="binding site" evidence="1">
    <location>
        <position position="136"/>
    </location>
    <ligand>
        <name>L-aspartate</name>
        <dbReference type="ChEBI" id="CHEBI:29991"/>
    </ligand>
</feature>
<feature type="binding site" evidence="1">
    <location>
        <position position="139"/>
    </location>
    <ligand>
        <name>L-citrulline</name>
        <dbReference type="ChEBI" id="CHEBI:57743"/>
    </ligand>
</feature>
<feature type="binding site" evidence="1">
    <location>
        <position position="192"/>
    </location>
    <ligand>
        <name>L-citrulline</name>
        <dbReference type="ChEBI" id="CHEBI:57743"/>
    </ligand>
</feature>
<feature type="binding site" evidence="1">
    <location>
        <position position="194"/>
    </location>
    <ligand>
        <name>ATP</name>
        <dbReference type="ChEBI" id="CHEBI:30616"/>
    </ligand>
</feature>
<feature type="binding site" evidence="1">
    <location>
        <position position="201"/>
    </location>
    <ligand>
        <name>L-citrulline</name>
        <dbReference type="ChEBI" id="CHEBI:57743"/>
    </ligand>
</feature>
<feature type="binding site" evidence="1">
    <location>
        <position position="203"/>
    </location>
    <ligand>
        <name>L-citrulline</name>
        <dbReference type="ChEBI" id="CHEBI:57743"/>
    </ligand>
</feature>
<feature type="binding site" evidence="1">
    <location>
        <position position="280"/>
    </location>
    <ligand>
        <name>L-citrulline</name>
        <dbReference type="ChEBI" id="CHEBI:57743"/>
    </ligand>
</feature>
<keyword id="KW-0028">Amino-acid biosynthesis</keyword>
<keyword id="KW-0055">Arginine biosynthesis</keyword>
<keyword id="KW-0067">ATP-binding</keyword>
<keyword id="KW-0963">Cytoplasm</keyword>
<keyword id="KW-0436">Ligase</keyword>
<keyword id="KW-0547">Nucleotide-binding</keyword>
<comment type="catalytic activity">
    <reaction evidence="1">
        <text>L-citrulline + L-aspartate + ATP = 2-(N(omega)-L-arginino)succinate + AMP + diphosphate + H(+)</text>
        <dbReference type="Rhea" id="RHEA:10932"/>
        <dbReference type="ChEBI" id="CHEBI:15378"/>
        <dbReference type="ChEBI" id="CHEBI:29991"/>
        <dbReference type="ChEBI" id="CHEBI:30616"/>
        <dbReference type="ChEBI" id="CHEBI:33019"/>
        <dbReference type="ChEBI" id="CHEBI:57472"/>
        <dbReference type="ChEBI" id="CHEBI:57743"/>
        <dbReference type="ChEBI" id="CHEBI:456215"/>
        <dbReference type="EC" id="6.3.4.5"/>
    </reaction>
</comment>
<comment type="pathway">
    <text evidence="1">Amino-acid biosynthesis; L-arginine biosynthesis; L-arginine from L-ornithine and carbamoyl phosphate: step 2/3.</text>
</comment>
<comment type="subunit">
    <text evidence="1">Homotetramer.</text>
</comment>
<comment type="subcellular location">
    <subcellularLocation>
        <location evidence="1">Cytoplasm</location>
    </subcellularLocation>
</comment>
<comment type="similarity">
    <text evidence="1">Belongs to the argininosuccinate synthase family. Type 2 subfamily.</text>
</comment>
<evidence type="ECO:0000255" key="1">
    <source>
        <dbReference type="HAMAP-Rule" id="MF_00581"/>
    </source>
</evidence>
<gene>
    <name evidence="1" type="primary">argG</name>
    <name type="ordered locus">ECIAI39_3668</name>
</gene>
<name>ASSY_ECO7I</name>
<reference key="1">
    <citation type="journal article" date="2009" name="PLoS Genet.">
        <title>Organised genome dynamics in the Escherichia coli species results in highly diverse adaptive paths.</title>
        <authorList>
            <person name="Touchon M."/>
            <person name="Hoede C."/>
            <person name="Tenaillon O."/>
            <person name="Barbe V."/>
            <person name="Baeriswyl S."/>
            <person name="Bidet P."/>
            <person name="Bingen E."/>
            <person name="Bonacorsi S."/>
            <person name="Bouchier C."/>
            <person name="Bouvet O."/>
            <person name="Calteau A."/>
            <person name="Chiapello H."/>
            <person name="Clermont O."/>
            <person name="Cruveiller S."/>
            <person name="Danchin A."/>
            <person name="Diard M."/>
            <person name="Dossat C."/>
            <person name="Karoui M.E."/>
            <person name="Frapy E."/>
            <person name="Garry L."/>
            <person name="Ghigo J.M."/>
            <person name="Gilles A.M."/>
            <person name="Johnson J."/>
            <person name="Le Bouguenec C."/>
            <person name="Lescat M."/>
            <person name="Mangenot S."/>
            <person name="Martinez-Jehanne V."/>
            <person name="Matic I."/>
            <person name="Nassif X."/>
            <person name="Oztas S."/>
            <person name="Petit M.A."/>
            <person name="Pichon C."/>
            <person name="Rouy Z."/>
            <person name="Ruf C.S."/>
            <person name="Schneider D."/>
            <person name="Tourret J."/>
            <person name="Vacherie B."/>
            <person name="Vallenet D."/>
            <person name="Medigue C."/>
            <person name="Rocha E.P.C."/>
            <person name="Denamur E."/>
        </authorList>
    </citation>
    <scope>NUCLEOTIDE SEQUENCE [LARGE SCALE GENOMIC DNA]</scope>
    <source>
        <strain>IAI39 / ExPEC</strain>
    </source>
</reference>
<accession>B7NKP0</accession>